<proteinExistence type="inferred from homology"/>
<reference key="1">
    <citation type="journal article" date="2010" name="Genome Biol. Evol.">
        <title>Continuing evolution of Burkholderia mallei through genome reduction and large-scale rearrangements.</title>
        <authorList>
            <person name="Losada L."/>
            <person name="Ronning C.M."/>
            <person name="DeShazer D."/>
            <person name="Woods D."/>
            <person name="Fedorova N."/>
            <person name="Kim H.S."/>
            <person name="Shabalina S.A."/>
            <person name="Pearson T.R."/>
            <person name="Brinkac L."/>
            <person name="Tan P."/>
            <person name="Nandi T."/>
            <person name="Crabtree J."/>
            <person name="Badger J."/>
            <person name="Beckstrom-Sternberg S."/>
            <person name="Saqib M."/>
            <person name="Schutzer S.E."/>
            <person name="Keim P."/>
            <person name="Nierman W.C."/>
        </authorList>
    </citation>
    <scope>NUCLEOTIDE SEQUENCE [LARGE SCALE GENOMIC DNA]</scope>
    <source>
        <strain>NCTC 10247</strain>
    </source>
</reference>
<accession>A3MMN2</accession>
<name>SYS_BURM7</name>
<feature type="chain" id="PRO_1000019629" description="Serine--tRNA ligase">
    <location>
        <begin position="1"/>
        <end position="433"/>
    </location>
</feature>
<feature type="binding site" evidence="1">
    <location>
        <begin position="235"/>
        <end position="237"/>
    </location>
    <ligand>
        <name>L-serine</name>
        <dbReference type="ChEBI" id="CHEBI:33384"/>
    </ligand>
</feature>
<feature type="binding site" evidence="1">
    <location>
        <begin position="266"/>
        <end position="268"/>
    </location>
    <ligand>
        <name>ATP</name>
        <dbReference type="ChEBI" id="CHEBI:30616"/>
    </ligand>
</feature>
<feature type="binding site" evidence="1">
    <location>
        <position position="289"/>
    </location>
    <ligand>
        <name>L-serine</name>
        <dbReference type="ChEBI" id="CHEBI:33384"/>
    </ligand>
</feature>
<feature type="binding site" evidence="1">
    <location>
        <begin position="353"/>
        <end position="356"/>
    </location>
    <ligand>
        <name>ATP</name>
        <dbReference type="ChEBI" id="CHEBI:30616"/>
    </ligand>
</feature>
<feature type="binding site" evidence="1">
    <location>
        <position position="388"/>
    </location>
    <ligand>
        <name>L-serine</name>
        <dbReference type="ChEBI" id="CHEBI:33384"/>
    </ligand>
</feature>
<keyword id="KW-0030">Aminoacyl-tRNA synthetase</keyword>
<keyword id="KW-0067">ATP-binding</keyword>
<keyword id="KW-0963">Cytoplasm</keyword>
<keyword id="KW-0436">Ligase</keyword>
<keyword id="KW-0547">Nucleotide-binding</keyword>
<keyword id="KW-0648">Protein biosynthesis</keyword>
<protein>
    <recommendedName>
        <fullName evidence="1">Serine--tRNA ligase</fullName>
        <ecNumber evidence="1">6.1.1.11</ecNumber>
    </recommendedName>
    <alternativeName>
        <fullName evidence="1">Seryl-tRNA synthetase</fullName>
        <shortName evidence="1">SerRS</shortName>
    </alternativeName>
    <alternativeName>
        <fullName evidence="1">Seryl-tRNA(Ser/Sec) synthetase</fullName>
    </alternativeName>
</protein>
<sequence length="433" mass="47607">MLDIQLLRKDLDGVAKRLADRGYPLDVAAFSALEAERRAIQTRTEELQARRNSLSKQIGAMKGRGEDTSAVMAEVGGIGDEMKASAVKLDEIQARLSELMLEMPNVPHESVPVGRDETENVEVRRWGAPRQFDFDVKDHVDVGTPLGLDFETGAKLSGARFTVLRGPIARLHRALAQFMLDTHTQQHGYSETYTPYIVNPDVLYGTGQLPKFAEDMFRVEKGGAENTVTQYLISTSEISLTNTVRDSIVEASALPIKLTAHSPCFRSEAGSYGRDTRGMIRQHQFDKVEMVQIVAPEASYAALDEMVGHAEAILQKLELPYRVVALCTGDMGFSAAKTFDLEVWLPAQNTYREISSCSNTESFQARRMQARFRNAQGKPELVHTLNGSGLAVGRTLVAVLENYQNADGSVTVPVALRPYMGGVERIDAPSSAA</sequence>
<evidence type="ECO:0000255" key="1">
    <source>
        <dbReference type="HAMAP-Rule" id="MF_00176"/>
    </source>
</evidence>
<organism>
    <name type="scientific">Burkholderia mallei (strain NCTC 10247)</name>
    <dbReference type="NCBI Taxonomy" id="320389"/>
    <lineage>
        <taxon>Bacteria</taxon>
        <taxon>Pseudomonadati</taxon>
        <taxon>Pseudomonadota</taxon>
        <taxon>Betaproteobacteria</taxon>
        <taxon>Burkholderiales</taxon>
        <taxon>Burkholderiaceae</taxon>
        <taxon>Burkholderia</taxon>
        <taxon>pseudomallei group</taxon>
    </lineage>
</organism>
<dbReference type="EC" id="6.1.1.11" evidence="1"/>
<dbReference type="EMBL" id="CP000548">
    <property type="protein sequence ID" value="ABO06374.1"/>
    <property type="molecule type" value="Genomic_DNA"/>
</dbReference>
<dbReference type="RefSeq" id="WP_004186129.1">
    <property type="nucleotide sequence ID" value="NZ_CP007802.1"/>
</dbReference>
<dbReference type="SMR" id="A3MMN2"/>
<dbReference type="GeneID" id="93061177"/>
<dbReference type="KEGG" id="bmaz:BM44_1232"/>
<dbReference type="KEGG" id="bmn:BMA10247_1986"/>
<dbReference type="PATRIC" id="fig|320389.8.peg.1377"/>
<dbReference type="UniPathway" id="UPA00906">
    <property type="reaction ID" value="UER00895"/>
</dbReference>
<dbReference type="GO" id="GO:0005737">
    <property type="term" value="C:cytoplasm"/>
    <property type="evidence" value="ECO:0007669"/>
    <property type="project" value="UniProtKB-SubCell"/>
</dbReference>
<dbReference type="GO" id="GO:0005524">
    <property type="term" value="F:ATP binding"/>
    <property type="evidence" value="ECO:0007669"/>
    <property type="project" value="UniProtKB-UniRule"/>
</dbReference>
<dbReference type="GO" id="GO:0004828">
    <property type="term" value="F:serine-tRNA ligase activity"/>
    <property type="evidence" value="ECO:0007669"/>
    <property type="project" value="UniProtKB-UniRule"/>
</dbReference>
<dbReference type="GO" id="GO:0016260">
    <property type="term" value="P:selenocysteine biosynthetic process"/>
    <property type="evidence" value="ECO:0007669"/>
    <property type="project" value="UniProtKB-UniRule"/>
</dbReference>
<dbReference type="GO" id="GO:0006434">
    <property type="term" value="P:seryl-tRNA aminoacylation"/>
    <property type="evidence" value="ECO:0007669"/>
    <property type="project" value="UniProtKB-UniRule"/>
</dbReference>
<dbReference type="CDD" id="cd00770">
    <property type="entry name" value="SerRS_core"/>
    <property type="match status" value="1"/>
</dbReference>
<dbReference type="Gene3D" id="3.30.930.10">
    <property type="entry name" value="Bira Bifunctional Protein, Domain 2"/>
    <property type="match status" value="1"/>
</dbReference>
<dbReference type="Gene3D" id="1.10.287.40">
    <property type="entry name" value="Serine-tRNA synthetase, tRNA binding domain"/>
    <property type="match status" value="1"/>
</dbReference>
<dbReference type="HAMAP" id="MF_00176">
    <property type="entry name" value="Ser_tRNA_synth_type1"/>
    <property type="match status" value="1"/>
</dbReference>
<dbReference type="InterPro" id="IPR002314">
    <property type="entry name" value="aa-tRNA-synt_IIb"/>
</dbReference>
<dbReference type="InterPro" id="IPR006195">
    <property type="entry name" value="aa-tRNA-synth_II"/>
</dbReference>
<dbReference type="InterPro" id="IPR045864">
    <property type="entry name" value="aa-tRNA-synth_II/BPL/LPL"/>
</dbReference>
<dbReference type="InterPro" id="IPR002317">
    <property type="entry name" value="Ser-tRNA-ligase_type_1"/>
</dbReference>
<dbReference type="InterPro" id="IPR015866">
    <property type="entry name" value="Ser-tRNA-synth_1_N"/>
</dbReference>
<dbReference type="InterPro" id="IPR042103">
    <property type="entry name" value="SerRS_1_N_sf"/>
</dbReference>
<dbReference type="InterPro" id="IPR033729">
    <property type="entry name" value="SerRS_core"/>
</dbReference>
<dbReference type="InterPro" id="IPR010978">
    <property type="entry name" value="tRNA-bd_arm"/>
</dbReference>
<dbReference type="NCBIfam" id="TIGR00414">
    <property type="entry name" value="serS"/>
    <property type="match status" value="1"/>
</dbReference>
<dbReference type="PANTHER" id="PTHR43697:SF1">
    <property type="entry name" value="SERINE--TRNA LIGASE"/>
    <property type="match status" value="1"/>
</dbReference>
<dbReference type="PANTHER" id="PTHR43697">
    <property type="entry name" value="SERYL-TRNA SYNTHETASE"/>
    <property type="match status" value="1"/>
</dbReference>
<dbReference type="Pfam" id="PF02403">
    <property type="entry name" value="Seryl_tRNA_N"/>
    <property type="match status" value="1"/>
</dbReference>
<dbReference type="Pfam" id="PF00587">
    <property type="entry name" value="tRNA-synt_2b"/>
    <property type="match status" value="1"/>
</dbReference>
<dbReference type="PIRSF" id="PIRSF001529">
    <property type="entry name" value="Ser-tRNA-synth_IIa"/>
    <property type="match status" value="1"/>
</dbReference>
<dbReference type="PRINTS" id="PR00981">
    <property type="entry name" value="TRNASYNTHSER"/>
</dbReference>
<dbReference type="SUPFAM" id="SSF55681">
    <property type="entry name" value="Class II aaRS and biotin synthetases"/>
    <property type="match status" value="1"/>
</dbReference>
<dbReference type="SUPFAM" id="SSF46589">
    <property type="entry name" value="tRNA-binding arm"/>
    <property type="match status" value="1"/>
</dbReference>
<dbReference type="PROSITE" id="PS50862">
    <property type="entry name" value="AA_TRNA_LIGASE_II"/>
    <property type="match status" value="1"/>
</dbReference>
<gene>
    <name evidence="1" type="primary">serS</name>
    <name type="ordered locus">BMA10247_1986</name>
</gene>
<comment type="function">
    <text evidence="1">Catalyzes the attachment of serine to tRNA(Ser). Is also able to aminoacylate tRNA(Sec) with serine, to form the misacylated tRNA L-seryl-tRNA(Sec), which will be further converted into selenocysteinyl-tRNA(Sec).</text>
</comment>
<comment type="catalytic activity">
    <reaction evidence="1">
        <text>tRNA(Ser) + L-serine + ATP = L-seryl-tRNA(Ser) + AMP + diphosphate + H(+)</text>
        <dbReference type="Rhea" id="RHEA:12292"/>
        <dbReference type="Rhea" id="RHEA-COMP:9669"/>
        <dbReference type="Rhea" id="RHEA-COMP:9703"/>
        <dbReference type="ChEBI" id="CHEBI:15378"/>
        <dbReference type="ChEBI" id="CHEBI:30616"/>
        <dbReference type="ChEBI" id="CHEBI:33019"/>
        <dbReference type="ChEBI" id="CHEBI:33384"/>
        <dbReference type="ChEBI" id="CHEBI:78442"/>
        <dbReference type="ChEBI" id="CHEBI:78533"/>
        <dbReference type="ChEBI" id="CHEBI:456215"/>
        <dbReference type="EC" id="6.1.1.11"/>
    </reaction>
</comment>
<comment type="catalytic activity">
    <reaction evidence="1">
        <text>tRNA(Sec) + L-serine + ATP = L-seryl-tRNA(Sec) + AMP + diphosphate + H(+)</text>
        <dbReference type="Rhea" id="RHEA:42580"/>
        <dbReference type="Rhea" id="RHEA-COMP:9742"/>
        <dbReference type="Rhea" id="RHEA-COMP:10128"/>
        <dbReference type="ChEBI" id="CHEBI:15378"/>
        <dbReference type="ChEBI" id="CHEBI:30616"/>
        <dbReference type="ChEBI" id="CHEBI:33019"/>
        <dbReference type="ChEBI" id="CHEBI:33384"/>
        <dbReference type="ChEBI" id="CHEBI:78442"/>
        <dbReference type="ChEBI" id="CHEBI:78533"/>
        <dbReference type="ChEBI" id="CHEBI:456215"/>
        <dbReference type="EC" id="6.1.1.11"/>
    </reaction>
</comment>
<comment type="pathway">
    <text evidence="1">Aminoacyl-tRNA biosynthesis; selenocysteinyl-tRNA(Sec) biosynthesis; L-seryl-tRNA(Sec) from L-serine and tRNA(Sec): step 1/1.</text>
</comment>
<comment type="subunit">
    <text evidence="1">Homodimer. The tRNA molecule binds across the dimer.</text>
</comment>
<comment type="subcellular location">
    <subcellularLocation>
        <location evidence="1">Cytoplasm</location>
    </subcellularLocation>
</comment>
<comment type="domain">
    <text evidence="1">Consists of two distinct domains, a catalytic core and a N-terminal extension that is involved in tRNA binding.</text>
</comment>
<comment type="similarity">
    <text evidence="1">Belongs to the class-II aminoacyl-tRNA synthetase family. Type-1 seryl-tRNA synthetase subfamily.</text>
</comment>